<sequence>MARNKIALIGSGMIGGTLAHLAGLKELGDVVLFDIAEGTPQGKGLDIAESSPVDGFDAKFTGANDYAAIEGADVVIVTAGVPRKPGMSRDDLLGINLKVMEQVGAGIKKYAPEAFVICITNPLDAMVWALQKFSGLPAHKVVGMAGVLDSARFRYFLSEEFNVSVEDVTAFVLGGHGDSMVPLARYSTVAGIPLPDLVKMGWTSQDKLDKIIQRTRDGGAEIVGLLKTGSAFYAPAASAIQMAESYLKDKKRVLPVAAQLSGQYGVKDMYVGVPTVIGANGVERIIEIDLDKDEKAQFDKSVASVAGLCEACIGIAPSLK</sequence>
<feature type="chain" id="PRO_1000191644" description="Malate dehydrogenase">
    <location>
        <begin position="1"/>
        <end position="320"/>
    </location>
</feature>
<feature type="active site" description="Proton acceptor" evidence="1">
    <location>
        <position position="176"/>
    </location>
</feature>
<feature type="binding site" evidence="1">
    <location>
        <begin position="10"/>
        <end position="15"/>
    </location>
    <ligand>
        <name>NAD(+)</name>
        <dbReference type="ChEBI" id="CHEBI:57540"/>
    </ligand>
</feature>
<feature type="binding site" evidence="1">
    <location>
        <position position="34"/>
    </location>
    <ligand>
        <name>NAD(+)</name>
        <dbReference type="ChEBI" id="CHEBI:57540"/>
    </ligand>
</feature>
<feature type="binding site" evidence="1">
    <location>
        <position position="83"/>
    </location>
    <ligand>
        <name>substrate</name>
    </ligand>
</feature>
<feature type="binding site" evidence="1">
    <location>
        <position position="89"/>
    </location>
    <ligand>
        <name>substrate</name>
    </ligand>
</feature>
<feature type="binding site" evidence="1">
    <location>
        <position position="96"/>
    </location>
    <ligand>
        <name>NAD(+)</name>
        <dbReference type="ChEBI" id="CHEBI:57540"/>
    </ligand>
</feature>
<feature type="binding site" evidence="1">
    <location>
        <begin position="119"/>
        <end position="121"/>
    </location>
    <ligand>
        <name>NAD(+)</name>
        <dbReference type="ChEBI" id="CHEBI:57540"/>
    </ligand>
</feature>
<feature type="binding site" evidence="1">
    <location>
        <position position="121"/>
    </location>
    <ligand>
        <name>substrate</name>
    </ligand>
</feature>
<feature type="binding site" evidence="1">
    <location>
        <position position="152"/>
    </location>
    <ligand>
        <name>substrate</name>
    </ligand>
</feature>
<evidence type="ECO:0000255" key="1">
    <source>
        <dbReference type="HAMAP-Rule" id="MF_00487"/>
    </source>
</evidence>
<name>MDH_BRUMB</name>
<accession>C0RFH2</accession>
<gene>
    <name evidence="1" type="primary">mdh</name>
    <name type="ordered locus">BMEA_A1984</name>
</gene>
<reference key="1">
    <citation type="submission" date="2009-03" db="EMBL/GenBank/DDBJ databases">
        <title>Brucella melitensis ATCC 23457 whole genome shotgun sequencing project.</title>
        <authorList>
            <person name="Setubal J.C."/>
            <person name="Boyle S."/>
            <person name="Crasta O.R."/>
            <person name="Gillespie J.J."/>
            <person name="Kenyon R.W."/>
            <person name="Lu J."/>
            <person name="Mane S."/>
            <person name="Nagrani S."/>
            <person name="Shallom J.M."/>
            <person name="Shallom S."/>
            <person name="Shukla M."/>
            <person name="Snyder E.E."/>
            <person name="Sobral B.W."/>
            <person name="Wattam A.R."/>
            <person name="Will R."/>
            <person name="Williams K."/>
            <person name="Yoo H."/>
            <person name="Munk C."/>
            <person name="Tapia R."/>
            <person name="Han C."/>
            <person name="Detter J.C."/>
            <person name="Bruce D."/>
            <person name="Brettin T.S."/>
        </authorList>
    </citation>
    <scope>NUCLEOTIDE SEQUENCE [LARGE SCALE GENOMIC DNA]</scope>
    <source>
        <strain>ATCC 23457</strain>
    </source>
</reference>
<comment type="function">
    <text evidence="1">Catalyzes the reversible oxidation of malate to oxaloacetate.</text>
</comment>
<comment type="catalytic activity">
    <reaction evidence="1">
        <text>(S)-malate + NAD(+) = oxaloacetate + NADH + H(+)</text>
        <dbReference type="Rhea" id="RHEA:21432"/>
        <dbReference type="ChEBI" id="CHEBI:15378"/>
        <dbReference type="ChEBI" id="CHEBI:15589"/>
        <dbReference type="ChEBI" id="CHEBI:16452"/>
        <dbReference type="ChEBI" id="CHEBI:57540"/>
        <dbReference type="ChEBI" id="CHEBI:57945"/>
        <dbReference type="EC" id="1.1.1.37"/>
    </reaction>
</comment>
<comment type="similarity">
    <text evidence="1">Belongs to the LDH/MDH superfamily. MDH type 3 family.</text>
</comment>
<organism>
    <name type="scientific">Brucella melitensis biotype 2 (strain ATCC 23457)</name>
    <dbReference type="NCBI Taxonomy" id="546272"/>
    <lineage>
        <taxon>Bacteria</taxon>
        <taxon>Pseudomonadati</taxon>
        <taxon>Pseudomonadota</taxon>
        <taxon>Alphaproteobacteria</taxon>
        <taxon>Hyphomicrobiales</taxon>
        <taxon>Brucellaceae</taxon>
        <taxon>Brucella/Ochrobactrum group</taxon>
        <taxon>Brucella</taxon>
    </lineage>
</organism>
<keyword id="KW-0520">NAD</keyword>
<keyword id="KW-0560">Oxidoreductase</keyword>
<keyword id="KW-0816">Tricarboxylic acid cycle</keyword>
<dbReference type="EC" id="1.1.1.37" evidence="1"/>
<dbReference type="EMBL" id="CP001488">
    <property type="protein sequence ID" value="ACO01644.1"/>
    <property type="molecule type" value="Genomic_DNA"/>
</dbReference>
<dbReference type="RefSeq" id="WP_004686256.1">
    <property type="nucleotide sequence ID" value="NC_012441.1"/>
</dbReference>
<dbReference type="SMR" id="C0RFH2"/>
<dbReference type="GeneID" id="97534787"/>
<dbReference type="KEGG" id="bmi:BMEA_A1984"/>
<dbReference type="HOGENOM" id="CLU_045401_2_1_5"/>
<dbReference type="Proteomes" id="UP000001748">
    <property type="component" value="Chromosome I"/>
</dbReference>
<dbReference type="GO" id="GO:0004459">
    <property type="term" value="F:L-lactate dehydrogenase activity"/>
    <property type="evidence" value="ECO:0007669"/>
    <property type="project" value="TreeGrafter"/>
</dbReference>
<dbReference type="GO" id="GO:0030060">
    <property type="term" value="F:L-malate dehydrogenase (NAD+) activity"/>
    <property type="evidence" value="ECO:0007669"/>
    <property type="project" value="UniProtKB-UniRule"/>
</dbReference>
<dbReference type="GO" id="GO:0006089">
    <property type="term" value="P:lactate metabolic process"/>
    <property type="evidence" value="ECO:0007669"/>
    <property type="project" value="TreeGrafter"/>
</dbReference>
<dbReference type="GO" id="GO:0006099">
    <property type="term" value="P:tricarboxylic acid cycle"/>
    <property type="evidence" value="ECO:0007669"/>
    <property type="project" value="UniProtKB-UniRule"/>
</dbReference>
<dbReference type="CDD" id="cd01339">
    <property type="entry name" value="LDH-like_MDH"/>
    <property type="match status" value="1"/>
</dbReference>
<dbReference type="FunFam" id="3.40.50.720:FF:000018">
    <property type="entry name" value="Malate dehydrogenase"/>
    <property type="match status" value="1"/>
</dbReference>
<dbReference type="FunFam" id="3.90.110.10:FF:000004">
    <property type="entry name" value="Malate dehydrogenase"/>
    <property type="match status" value="1"/>
</dbReference>
<dbReference type="Gene3D" id="3.90.110.10">
    <property type="entry name" value="Lactate dehydrogenase/glycoside hydrolase, family 4, C-terminal"/>
    <property type="match status" value="1"/>
</dbReference>
<dbReference type="Gene3D" id="3.40.50.720">
    <property type="entry name" value="NAD(P)-binding Rossmann-like Domain"/>
    <property type="match status" value="1"/>
</dbReference>
<dbReference type="HAMAP" id="MF_00487">
    <property type="entry name" value="Malate_dehydrog_3"/>
    <property type="match status" value="1"/>
</dbReference>
<dbReference type="InterPro" id="IPR001557">
    <property type="entry name" value="L-lactate/malate_DH"/>
</dbReference>
<dbReference type="InterPro" id="IPR022383">
    <property type="entry name" value="Lactate/malate_DH_C"/>
</dbReference>
<dbReference type="InterPro" id="IPR001236">
    <property type="entry name" value="Lactate/malate_DH_N"/>
</dbReference>
<dbReference type="InterPro" id="IPR015955">
    <property type="entry name" value="Lactate_DH/Glyco_Ohase_4_C"/>
</dbReference>
<dbReference type="InterPro" id="IPR011275">
    <property type="entry name" value="Malate_DH_type3"/>
</dbReference>
<dbReference type="InterPro" id="IPR036291">
    <property type="entry name" value="NAD(P)-bd_dom_sf"/>
</dbReference>
<dbReference type="NCBIfam" id="TIGR01763">
    <property type="entry name" value="MalateDH_bact"/>
    <property type="match status" value="1"/>
</dbReference>
<dbReference type="NCBIfam" id="NF004863">
    <property type="entry name" value="PRK06223.1"/>
    <property type="match status" value="1"/>
</dbReference>
<dbReference type="PANTHER" id="PTHR43128">
    <property type="entry name" value="L-2-HYDROXYCARBOXYLATE DEHYDROGENASE (NAD(P)(+))"/>
    <property type="match status" value="1"/>
</dbReference>
<dbReference type="PANTHER" id="PTHR43128:SF16">
    <property type="entry name" value="L-LACTATE DEHYDROGENASE"/>
    <property type="match status" value="1"/>
</dbReference>
<dbReference type="Pfam" id="PF02866">
    <property type="entry name" value="Ldh_1_C"/>
    <property type="match status" value="1"/>
</dbReference>
<dbReference type="Pfam" id="PF00056">
    <property type="entry name" value="Ldh_1_N"/>
    <property type="match status" value="1"/>
</dbReference>
<dbReference type="PIRSF" id="PIRSF000102">
    <property type="entry name" value="Lac_mal_DH"/>
    <property type="match status" value="1"/>
</dbReference>
<dbReference type="PRINTS" id="PR00086">
    <property type="entry name" value="LLDHDRGNASE"/>
</dbReference>
<dbReference type="SUPFAM" id="SSF56327">
    <property type="entry name" value="LDH C-terminal domain-like"/>
    <property type="match status" value="1"/>
</dbReference>
<dbReference type="SUPFAM" id="SSF51735">
    <property type="entry name" value="NAD(P)-binding Rossmann-fold domains"/>
    <property type="match status" value="1"/>
</dbReference>
<proteinExistence type="inferred from homology"/>
<protein>
    <recommendedName>
        <fullName evidence="1">Malate dehydrogenase</fullName>
        <ecNumber evidence="1">1.1.1.37</ecNumber>
    </recommendedName>
</protein>